<keyword id="KW-0067">ATP-binding</keyword>
<keyword id="KW-0317">Glutathione biosynthesis</keyword>
<keyword id="KW-0436">Ligase</keyword>
<keyword id="KW-0547">Nucleotide-binding</keyword>
<proteinExistence type="inferred from homology"/>
<organism>
    <name type="scientific">Escherichia coli (strain SMS-3-5 / SECEC)</name>
    <dbReference type="NCBI Taxonomy" id="439855"/>
    <lineage>
        <taxon>Bacteria</taxon>
        <taxon>Pseudomonadati</taxon>
        <taxon>Pseudomonadota</taxon>
        <taxon>Gammaproteobacteria</taxon>
        <taxon>Enterobacterales</taxon>
        <taxon>Enterobacteriaceae</taxon>
        <taxon>Escherichia</taxon>
    </lineage>
</organism>
<evidence type="ECO:0000255" key="1">
    <source>
        <dbReference type="HAMAP-Rule" id="MF_00578"/>
    </source>
</evidence>
<protein>
    <recommendedName>
        <fullName evidence="1">Glutamate--cysteine ligase</fullName>
        <ecNumber evidence="1">6.3.2.2</ecNumber>
    </recommendedName>
    <alternativeName>
        <fullName evidence="1">Gamma-ECS</fullName>
        <shortName evidence="1">GCS</shortName>
    </alternativeName>
    <alternativeName>
        <fullName evidence="1">Gamma-glutamylcysteine synthetase</fullName>
    </alternativeName>
</protein>
<accession>B1LPG3</accession>
<feature type="chain" id="PRO_1000129594" description="Glutamate--cysteine ligase">
    <location>
        <begin position="1"/>
        <end position="518"/>
    </location>
</feature>
<dbReference type="EC" id="6.3.2.2" evidence="1"/>
<dbReference type="EMBL" id="CP000970">
    <property type="protein sequence ID" value="ACB19118.1"/>
    <property type="molecule type" value="Genomic_DNA"/>
</dbReference>
<dbReference type="RefSeq" id="WP_000611781.1">
    <property type="nucleotide sequence ID" value="NC_010498.1"/>
</dbReference>
<dbReference type="SMR" id="B1LPG3"/>
<dbReference type="KEGG" id="ecm:EcSMS35_2810"/>
<dbReference type="HOGENOM" id="CLU_020728_3_0_6"/>
<dbReference type="UniPathway" id="UPA00142">
    <property type="reaction ID" value="UER00209"/>
</dbReference>
<dbReference type="Proteomes" id="UP000007011">
    <property type="component" value="Chromosome"/>
</dbReference>
<dbReference type="GO" id="GO:0005829">
    <property type="term" value="C:cytosol"/>
    <property type="evidence" value="ECO:0007669"/>
    <property type="project" value="TreeGrafter"/>
</dbReference>
<dbReference type="GO" id="GO:0005524">
    <property type="term" value="F:ATP binding"/>
    <property type="evidence" value="ECO:0007669"/>
    <property type="project" value="UniProtKB-KW"/>
</dbReference>
<dbReference type="GO" id="GO:0004357">
    <property type="term" value="F:glutamate-cysteine ligase activity"/>
    <property type="evidence" value="ECO:0007669"/>
    <property type="project" value="UniProtKB-UniRule"/>
</dbReference>
<dbReference type="GO" id="GO:0046872">
    <property type="term" value="F:metal ion binding"/>
    <property type="evidence" value="ECO:0007669"/>
    <property type="project" value="TreeGrafter"/>
</dbReference>
<dbReference type="GO" id="GO:0006750">
    <property type="term" value="P:glutathione biosynthetic process"/>
    <property type="evidence" value="ECO:0007669"/>
    <property type="project" value="UniProtKB-UniRule"/>
</dbReference>
<dbReference type="FunFam" id="3.30.590.20:FF:000001">
    <property type="entry name" value="Glutamate--cysteine ligase"/>
    <property type="match status" value="1"/>
</dbReference>
<dbReference type="Gene3D" id="3.30.590.20">
    <property type="match status" value="1"/>
</dbReference>
<dbReference type="HAMAP" id="MF_00578">
    <property type="entry name" value="Glu_cys_ligase"/>
    <property type="match status" value="1"/>
</dbReference>
<dbReference type="InterPro" id="IPR014746">
    <property type="entry name" value="Gln_synth/guanido_kin_cat_dom"/>
</dbReference>
<dbReference type="InterPro" id="IPR007370">
    <property type="entry name" value="Glu_cys_ligase"/>
</dbReference>
<dbReference type="InterPro" id="IPR006334">
    <property type="entry name" value="Glut_cys_ligase"/>
</dbReference>
<dbReference type="NCBIfam" id="TIGR01434">
    <property type="entry name" value="glu_cys_ligase"/>
    <property type="match status" value="1"/>
</dbReference>
<dbReference type="PANTHER" id="PTHR38761">
    <property type="entry name" value="GLUTAMATE--CYSTEINE LIGASE"/>
    <property type="match status" value="1"/>
</dbReference>
<dbReference type="PANTHER" id="PTHR38761:SF1">
    <property type="entry name" value="GLUTAMATE--CYSTEINE LIGASE"/>
    <property type="match status" value="1"/>
</dbReference>
<dbReference type="Pfam" id="PF04262">
    <property type="entry name" value="Glu_cys_ligase"/>
    <property type="match status" value="1"/>
</dbReference>
<dbReference type="SUPFAM" id="SSF55931">
    <property type="entry name" value="Glutamine synthetase/guanido kinase"/>
    <property type="match status" value="1"/>
</dbReference>
<gene>
    <name evidence="1" type="primary">gshA</name>
    <name type="ordered locus">EcSMS35_2810</name>
</gene>
<name>GSH1_ECOSM</name>
<comment type="catalytic activity">
    <reaction evidence="1">
        <text>L-cysteine + L-glutamate + ATP = gamma-L-glutamyl-L-cysteine + ADP + phosphate + H(+)</text>
        <dbReference type="Rhea" id="RHEA:13285"/>
        <dbReference type="ChEBI" id="CHEBI:15378"/>
        <dbReference type="ChEBI" id="CHEBI:29985"/>
        <dbReference type="ChEBI" id="CHEBI:30616"/>
        <dbReference type="ChEBI" id="CHEBI:35235"/>
        <dbReference type="ChEBI" id="CHEBI:43474"/>
        <dbReference type="ChEBI" id="CHEBI:58173"/>
        <dbReference type="ChEBI" id="CHEBI:456216"/>
        <dbReference type="EC" id="6.3.2.2"/>
    </reaction>
</comment>
<comment type="pathway">
    <text evidence="1">Sulfur metabolism; glutathione biosynthesis; glutathione from L-cysteine and L-glutamate: step 1/2.</text>
</comment>
<comment type="similarity">
    <text evidence="1">Belongs to the glutamate--cysteine ligase type 1 family. Type 1 subfamily.</text>
</comment>
<sequence>MIPDVSQALAWLEKHPQALKGIQRGLERETLRVNADGTLATTGHPEALGSALTHKWITTDFAEALLEFITPVDGDIEHMLTFMRDLHRYTARNMGDERMWPLSMPCYIAEGQDIELAQYGTSNTGRFKTLYREGLKNRYGALMQTISGVHYNFSLPMAFWQAKCGDIAGADAKEKISAGYFRVIRNYYRFGWVIPYLFGASPAICSSFLQGKPTSLPFEKTECGMYYLPYATSLRLSDLGYTNKSQSNLGITFNDLYEYVAGLKQAIKTPSEEYAKIGIEKDGKRLQINSNVLQIENELYAPIRPKRVTRSGESPSDALLRGGIEYIEVRSLDINPFSPIGVDEQQVRFLDLFMVWCALADAPEMSSSELACTRVNWNRVILEGRKPGLTLGIGCETAQFPLPQVGKDLFRDLKRVAQTLDSINGGEAYQKVCDELVACFDNPDLTFSARILRSMIDTGIGGTGKAFAEAYRNLLREEPLEILREEDFVAEREASERRQQEMEAADTEPFAVWLEKHA</sequence>
<reference key="1">
    <citation type="journal article" date="2008" name="J. Bacteriol.">
        <title>Insights into the environmental resistance gene pool from the genome sequence of the multidrug-resistant environmental isolate Escherichia coli SMS-3-5.</title>
        <authorList>
            <person name="Fricke W.F."/>
            <person name="Wright M.S."/>
            <person name="Lindell A.H."/>
            <person name="Harkins D.M."/>
            <person name="Baker-Austin C."/>
            <person name="Ravel J."/>
            <person name="Stepanauskas R."/>
        </authorList>
    </citation>
    <scope>NUCLEOTIDE SEQUENCE [LARGE SCALE GENOMIC DNA]</scope>
    <source>
        <strain>SMS-3-5 / SECEC</strain>
    </source>
</reference>